<organism>
    <name type="scientific">Bartonella henselae (strain ATCC 49882 / DSM 28221 / CCUG 30454 / Houston 1)</name>
    <name type="common">Rochalimaea henselae</name>
    <dbReference type="NCBI Taxonomy" id="283166"/>
    <lineage>
        <taxon>Bacteria</taxon>
        <taxon>Pseudomonadati</taxon>
        <taxon>Pseudomonadota</taxon>
        <taxon>Alphaproteobacteria</taxon>
        <taxon>Hyphomicrobiales</taxon>
        <taxon>Bartonellaceae</taxon>
        <taxon>Bartonella</taxon>
    </lineage>
</organism>
<comment type="function">
    <text evidence="1">Cleaves peptides in various proteins in a process that requires ATP hydrolysis. Has a chymotrypsin-like activity. Plays a major role in the degradation of misfolded proteins.</text>
</comment>
<comment type="catalytic activity">
    <reaction evidence="1">
        <text>Hydrolysis of proteins to small peptides in the presence of ATP and magnesium. alpha-casein is the usual test substrate. In the absence of ATP, only oligopeptides shorter than five residues are hydrolyzed (such as succinyl-Leu-Tyr-|-NHMec, and Leu-Tyr-Leu-|-Tyr-Trp, in which cleavage of the -Tyr-|-Leu- and -Tyr-|-Trp bonds also occurs).</text>
        <dbReference type="EC" id="3.4.21.92"/>
    </reaction>
</comment>
<comment type="subunit">
    <text evidence="1">Fourteen ClpP subunits assemble into 2 heptameric rings which stack back to back to give a disk-like structure with a central cavity, resembling the structure of eukaryotic proteasomes.</text>
</comment>
<comment type="subcellular location">
    <subcellularLocation>
        <location evidence="1">Cytoplasm</location>
    </subcellularLocation>
</comment>
<comment type="similarity">
    <text evidence="1">Belongs to the peptidase S14 family.</text>
</comment>
<reference key="1">
    <citation type="journal article" date="2004" name="Proc. Natl. Acad. Sci. U.S.A.">
        <title>The louse-borne human pathogen Bartonella quintana is a genomic derivative of the zoonotic agent Bartonella henselae.</title>
        <authorList>
            <person name="Alsmark U.C.M."/>
            <person name="Frank A.C."/>
            <person name="Karlberg E.O."/>
            <person name="Legault B.-A."/>
            <person name="Ardell D.H."/>
            <person name="Canbaeck B."/>
            <person name="Eriksson A.-S."/>
            <person name="Naeslund A.K."/>
            <person name="Handley S.A."/>
            <person name="Huvet M."/>
            <person name="La Scola B."/>
            <person name="Holmberg M."/>
            <person name="Andersson S.G.E."/>
        </authorList>
    </citation>
    <scope>NUCLEOTIDE SEQUENCE [LARGE SCALE GENOMIC DNA]</scope>
    <source>
        <strain>ATCC 49882 / DSM 28221 / CCUG 30454 / Houston 1</strain>
    </source>
</reference>
<feature type="chain" id="PRO_0000179503" description="ATP-dependent Clp protease proteolytic subunit">
    <location>
        <begin position="1"/>
        <end position="210"/>
    </location>
</feature>
<feature type="active site" description="Nucleophile" evidence="1">
    <location>
        <position position="106"/>
    </location>
</feature>
<feature type="active site" evidence="1">
    <location>
        <position position="131"/>
    </location>
</feature>
<protein>
    <recommendedName>
        <fullName evidence="1">ATP-dependent Clp protease proteolytic subunit</fullName>
        <ecNumber evidence="1">3.4.21.92</ecNumber>
    </recommendedName>
    <alternativeName>
        <fullName evidence="1">Endopeptidase Clp</fullName>
    </alternativeName>
</protein>
<keyword id="KW-0963">Cytoplasm</keyword>
<keyword id="KW-0378">Hydrolase</keyword>
<keyword id="KW-0645">Protease</keyword>
<keyword id="KW-0720">Serine protease</keyword>
<evidence type="ECO:0000255" key="1">
    <source>
        <dbReference type="HAMAP-Rule" id="MF_00444"/>
    </source>
</evidence>
<gene>
    <name evidence="1" type="primary">clpP</name>
    <name type="ordered locus">BH05880</name>
</gene>
<sequence>MSDPIKTALSLVPMVIEQTNRGERAYDIFSRLLKERIIFINGPVEDGMAMLVCAQLLFLEAENPKKEISLYINSPGGVVTSGMAIYDTMQFIRPPVSTLCMGQAASMGSLLLTAGAKGHRFTLPNARIMVHQPSGGFQGQASDIERHAQDIIKMKQRLNEIYVQHTGQNYDVIERTLDRDHFMTAEEAKQFGLVDDVIQYRAETEKEEKD</sequence>
<proteinExistence type="inferred from homology"/>
<dbReference type="EC" id="3.4.21.92" evidence="1"/>
<dbReference type="EMBL" id="BX897699">
    <property type="protein sequence ID" value="CAF27396.1"/>
    <property type="molecule type" value="Genomic_DNA"/>
</dbReference>
<dbReference type="RefSeq" id="WP_011180516.1">
    <property type="nucleotide sequence ID" value="NZ_LRIJ02000001.1"/>
</dbReference>
<dbReference type="SMR" id="Q6G3Z3"/>
<dbReference type="MEROPS" id="S14.001"/>
<dbReference type="PaxDb" id="283166-BH05880"/>
<dbReference type="EnsemblBacteria" id="CAF27396">
    <property type="protein sequence ID" value="CAF27396"/>
    <property type="gene ID" value="BH05880"/>
</dbReference>
<dbReference type="GeneID" id="92985247"/>
<dbReference type="KEGG" id="bhe:BH05880"/>
<dbReference type="eggNOG" id="COG0740">
    <property type="taxonomic scope" value="Bacteria"/>
</dbReference>
<dbReference type="OrthoDB" id="9802800at2"/>
<dbReference type="Proteomes" id="UP000000421">
    <property type="component" value="Chromosome"/>
</dbReference>
<dbReference type="GO" id="GO:0005737">
    <property type="term" value="C:cytoplasm"/>
    <property type="evidence" value="ECO:0007669"/>
    <property type="project" value="UniProtKB-SubCell"/>
</dbReference>
<dbReference type="GO" id="GO:0009368">
    <property type="term" value="C:endopeptidase Clp complex"/>
    <property type="evidence" value="ECO:0007669"/>
    <property type="project" value="TreeGrafter"/>
</dbReference>
<dbReference type="GO" id="GO:0004176">
    <property type="term" value="F:ATP-dependent peptidase activity"/>
    <property type="evidence" value="ECO:0007669"/>
    <property type="project" value="InterPro"/>
</dbReference>
<dbReference type="GO" id="GO:0051117">
    <property type="term" value="F:ATPase binding"/>
    <property type="evidence" value="ECO:0007669"/>
    <property type="project" value="TreeGrafter"/>
</dbReference>
<dbReference type="GO" id="GO:0004252">
    <property type="term" value="F:serine-type endopeptidase activity"/>
    <property type="evidence" value="ECO:0007669"/>
    <property type="project" value="UniProtKB-UniRule"/>
</dbReference>
<dbReference type="GO" id="GO:0006515">
    <property type="term" value="P:protein quality control for misfolded or incompletely synthesized proteins"/>
    <property type="evidence" value="ECO:0007669"/>
    <property type="project" value="TreeGrafter"/>
</dbReference>
<dbReference type="CDD" id="cd07017">
    <property type="entry name" value="S14_ClpP_2"/>
    <property type="match status" value="1"/>
</dbReference>
<dbReference type="FunFam" id="3.90.226.10:FF:000001">
    <property type="entry name" value="ATP-dependent Clp protease proteolytic subunit"/>
    <property type="match status" value="1"/>
</dbReference>
<dbReference type="Gene3D" id="3.90.226.10">
    <property type="entry name" value="2-enoyl-CoA Hydratase, Chain A, domain 1"/>
    <property type="match status" value="1"/>
</dbReference>
<dbReference type="HAMAP" id="MF_00444">
    <property type="entry name" value="ClpP"/>
    <property type="match status" value="1"/>
</dbReference>
<dbReference type="InterPro" id="IPR001907">
    <property type="entry name" value="ClpP"/>
</dbReference>
<dbReference type="InterPro" id="IPR029045">
    <property type="entry name" value="ClpP/crotonase-like_dom_sf"/>
</dbReference>
<dbReference type="InterPro" id="IPR023562">
    <property type="entry name" value="ClpP/TepA"/>
</dbReference>
<dbReference type="InterPro" id="IPR033135">
    <property type="entry name" value="ClpP_His_AS"/>
</dbReference>
<dbReference type="InterPro" id="IPR018215">
    <property type="entry name" value="ClpP_Ser_AS"/>
</dbReference>
<dbReference type="NCBIfam" id="TIGR00493">
    <property type="entry name" value="clpP"/>
    <property type="match status" value="1"/>
</dbReference>
<dbReference type="NCBIfam" id="NF001368">
    <property type="entry name" value="PRK00277.1"/>
    <property type="match status" value="1"/>
</dbReference>
<dbReference type="NCBIfam" id="NF009205">
    <property type="entry name" value="PRK12553.1"/>
    <property type="match status" value="1"/>
</dbReference>
<dbReference type="PANTHER" id="PTHR10381">
    <property type="entry name" value="ATP-DEPENDENT CLP PROTEASE PROTEOLYTIC SUBUNIT"/>
    <property type="match status" value="1"/>
</dbReference>
<dbReference type="PANTHER" id="PTHR10381:SF70">
    <property type="entry name" value="ATP-DEPENDENT CLP PROTEASE PROTEOLYTIC SUBUNIT"/>
    <property type="match status" value="1"/>
</dbReference>
<dbReference type="Pfam" id="PF00574">
    <property type="entry name" value="CLP_protease"/>
    <property type="match status" value="1"/>
</dbReference>
<dbReference type="PRINTS" id="PR00127">
    <property type="entry name" value="CLPPROTEASEP"/>
</dbReference>
<dbReference type="SUPFAM" id="SSF52096">
    <property type="entry name" value="ClpP/crotonase"/>
    <property type="match status" value="1"/>
</dbReference>
<dbReference type="PROSITE" id="PS00382">
    <property type="entry name" value="CLP_PROTEASE_HIS"/>
    <property type="match status" value="1"/>
</dbReference>
<dbReference type="PROSITE" id="PS00381">
    <property type="entry name" value="CLP_PROTEASE_SER"/>
    <property type="match status" value="1"/>
</dbReference>
<name>CLPP_BARHE</name>
<accession>Q6G3Z3</accession>